<protein>
    <recommendedName>
        <fullName evidence="1">GTPase Era</fullName>
    </recommendedName>
</protein>
<organism>
    <name type="scientific">Xanthomonas oryzae pv. oryzae (strain MAFF 311018)</name>
    <dbReference type="NCBI Taxonomy" id="342109"/>
    <lineage>
        <taxon>Bacteria</taxon>
        <taxon>Pseudomonadati</taxon>
        <taxon>Pseudomonadota</taxon>
        <taxon>Gammaproteobacteria</taxon>
        <taxon>Lysobacterales</taxon>
        <taxon>Lysobacteraceae</taxon>
        <taxon>Xanthomonas</taxon>
    </lineage>
</organism>
<keyword id="KW-0997">Cell inner membrane</keyword>
<keyword id="KW-1003">Cell membrane</keyword>
<keyword id="KW-0963">Cytoplasm</keyword>
<keyword id="KW-0342">GTP-binding</keyword>
<keyword id="KW-0472">Membrane</keyword>
<keyword id="KW-0547">Nucleotide-binding</keyword>
<keyword id="KW-0690">Ribosome biogenesis</keyword>
<keyword id="KW-0694">RNA-binding</keyword>
<keyword id="KW-0699">rRNA-binding</keyword>
<name>ERA_XANOM</name>
<gene>
    <name evidence="1" type="primary">era</name>
    <name type="ordered locus">XOO1752</name>
</gene>
<dbReference type="EMBL" id="AP008229">
    <property type="protein sequence ID" value="BAE68507.1"/>
    <property type="molecule type" value="Genomic_DNA"/>
</dbReference>
<dbReference type="RefSeq" id="WP_011258603.1">
    <property type="nucleotide sequence ID" value="NC_007705.1"/>
</dbReference>
<dbReference type="SMR" id="Q2P4M0"/>
<dbReference type="KEGG" id="xom:XOO1752"/>
<dbReference type="HOGENOM" id="CLU_038009_1_2_6"/>
<dbReference type="GO" id="GO:0005829">
    <property type="term" value="C:cytosol"/>
    <property type="evidence" value="ECO:0007669"/>
    <property type="project" value="TreeGrafter"/>
</dbReference>
<dbReference type="GO" id="GO:0005886">
    <property type="term" value="C:plasma membrane"/>
    <property type="evidence" value="ECO:0007669"/>
    <property type="project" value="UniProtKB-SubCell"/>
</dbReference>
<dbReference type="GO" id="GO:0005525">
    <property type="term" value="F:GTP binding"/>
    <property type="evidence" value="ECO:0007669"/>
    <property type="project" value="UniProtKB-UniRule"/>
</dbReference>
<dbReference type="GO" id="GO:0003924">
    <property type="term" value="F:GTPase activity"/>
    <property type="evidence" value="ECO:0007669"/>
    <property type="project" value="UniProtKB-UniRule"/>
</dbReference>
<dbReference type="GO" id="GO:0043024">
    <property type="term" value="F:ribosomal small subunit binding"/>
    <property type="evidence" value="ECO:0007669"/>
    <property type="project" value="TreeGrafter"/>
</dbReference>
<dbReference type="GO" id="GO:0070181">
    <property type="term" value="F:small ribosomal subunit rRNA binding"/>
    <property type="evidence" value="ECO:0007669"/>
    <property type="project" value="UniProtKB-UniRule"/>
</dbReference>
<dbReference type="GO" id="GO:0000028">
    <property type="term" value="P:ribosomal small subunit assembly"/>
    <property type="evidence" value="ECO:0007669"/>
    <property type="project" value="TreeGrafter"/>
</dbReference>
<dbReference type="CDD" id="cd04163">
    <property type="entry name" value="Era"/>
    <property type="match status" value="1"/>
</dbReference>
<dbReference type="CDD" id="cd22534">
    <property type="entry name" value="KH-II_Era"/>
    <property type="match status" value="1"/>
</dbReference>
<dbReference type="FunFam" id="3.30.300.20:FF:000003">
    <property type="entry name" value="GTPase Era"/>
    <property type="match status" value="1"/>
</dbReference>
<dbReference type="FunFam" id="3.40.50.300:FF:001543">
    <property type="entry name" value="GTPase Era"/>
    <property type="match status" value="1"/>
</dbReference>
<dbReference type="Gene3D" id="3.30.300.20">
    <property type="match status" value="1"/>
</dbReference>
<dbReference type="Gene3D" id="3.40.50.300">
    <property type="entry name" value="P-loop containing nucleotide triphosphate hydrolases"/>
    <property type="match status" value="1"/>
</dbReference>
<dbReference type="HAMAP" id="MF_00367">
    <property type="entry name" value="GTPase_Era"/>
    <property type="match status" value="1"/>
</dbReference>
<dbReference type="InterPro" id="IPR030388">
    <property type="entry name" value="G_ERA_dom"/>
</dbReference>
<dbReference type="InterPro" id="IPR006073">
    <property type="entry name" value="GTP-bd"/>
</dbReference>
<dbReference type="InterPro" id="IPR005662">
    <property type="entry name" value="GTPase_Era-like"/>
</dbReference>
<dbReference type="InterPro" id="IPR015946">
    <property type="entry name" value="KH_dom-like_a/b"/>
</dbReference>
<dbReference type="InterPro" id="IPR004044">
    <property type="entry name" value="KH_dom_type_2"/>
</dbReference>
<dbReference type="InterPro" id="IPR009019">
    <property type="entry name" value="KH_sf_prok-type"/>
</dbReference>
<dbReference type="InterPro" id="IPR027417">
    <property type="entry name" value="P-loop_NTPase"/>
</dbReference>
<dbReference type="InterPro" id="IPR005225">
    <property type="entry name" value="Small_GTP-bd"/>
</dbReference>
<dbReference type="NCBIfam" id="TIGR00436">
    <property type="entry name" value="era"/>
    <property type="match status" value="1"/>
</dbReference>
<dbReference type="NCBIfam" id="NF000908">
    <property type="entry name" value="PRK00089.1"/>
    <property type="match status" value="1"/>
</dbReference>
<dbReference type="NCBIfam" id="TIGR00231">
    <property type="entry name" value="small_GTP"/>
    <property type="match status" value="1"/>
</dbReference>
<dbReference type="PANTHER" id="PTHR42698">
    <property type="entry name" value="GTPASE ERA"/>
    <property type="match status" value="1"/>
</dbReference>
<dbReference type="PANTHER" id="PTHR42698:SF1">
    <property type="entry name" value="GTPASE ERA, MITOCHONDRIAL"/>
    <property type="match status" value="1"/>
</dbReference>
<dbReference type="Pfam" id="PF07650">
    <property type="entry name" value="KH_2"/>
    <property type="match status" value="1"/>
</dbReference>
<dbReference type="Pfam" id="PF01926">
    <property type="entry name" value="MMR_HSR1"/>
    <property type="match status" value="1"/>
</dbReference>
<dbReference type="PRINTS" id="PR00326">
    <property type="entry name" value="GTP1OBG"/>
</dbReference>
<dbReference type="SUPFAM" id="SSF52540">
    <property type="entry name" value="P-loop containing nucleoside triphosphate hydrolases"/>
    <property type="match status" value="1"/>
</dbReference>
<dbReference type="SUPFAM" id="SSF54814">
    <property type="entry name" value="Prokaryotic type KH domain (KH-domain type II)"/>
    <property type="match status" value="1"/>
</dbReference>
<dbReference type="PROSITE" id="PS51713">
    <property type="entry name" value="G_ERA"/>
    <property type="match status" value="1"/>
</dbReference>
<dbReference type="PROSITE" id="PS50823">
    <property type="entry name" value="KH_TYPE_2"/>
    <property type="match status" value="1"/>
</dbReference>
<proteinExistence type="inferred from homology"/>
<feature type="chain" id="PRO_1000079770" description="GTPase Era">
    <location>
        <begin position="1"/>
        <end position="299"/>
    </location>
</feature>
<feature type="domain" description="Era-type G" evidence="2">
    <location>
        <begin position="9"/>
        <end position="177"/>
    </location>
</feature>
<feature type="domain" description="KH type-2" evidence="1">
    <location>
        <begin position="200"/>
        <end position="284"/>
    </location>
</feature>
<feature type="region of interest" description="G1" evidence="2">
    <location>
        <begin position="17"/>
        <end position="24"/>
    </location>
</feature>
<feature type="region of interest" description="G2" evidence="2">
    <location>
        <begin position="43"/>
        <end position="47"/>
    </location>
</feature>
<feature type="region of interest" description="G3" evidence="2">
    <location>
        <begin position="64"/>
        <end position="67"/>
    </location>
</feature>
<feature type="region of interest" description="G4" evidence="2">
    <location>
        <begin position="126"/>
        <end position="129"/>
    </location>
</feature>
<feature type="region of interest" description="G5" evidence="2">
    <location>
        <begin position="156"/>
        <end position="158"/>
    </location>
</feature>
<feature type="binding site" evidence="1">
    <location>
        <begin position="17"/>
        <end position="24"/>
    </location>
    <ligand>
        <name>GTP</name>
        <dbReference type="ChEBI" id="CHEBI:37565"/>
    </ligand>
</feature>
<feature type="binding site" evidence="1">
    <location>
        <begin position="64"/>
        <end position="68"/>
    </location>
    <ligand>
        <name>GTP</name>
        <dbReference type="ChEBI" id="CHEBI:37565"/>
    </ligand>
</feature>
<feature type="binding site" evidence="1">
    <location>
        <begin position="126"/>
        <end position="129"/>
    </location>
    <ligand>
        <name>GTP</name>
        <dbReference type="ChEBI" id="CHEBI:37565"/>
    </ligand>
</feature>
<comment type="function">
    <text evidence="1">An essential GTPase that binds both GDP and GTP, with rapid nucleotide exchange. Plays a role in 16S rRNA processing and 30S ribosomal subunit biogenesis and possibly also in cell cycle regulation and energy metabolism.</text>
</comment>
<comment type="subunit">
    <text evidence="1">Monomer.</text>
</comment>
<comment type="subcellular location">
    <subcellularLocation>
        <location>Cytoplasm</location>
    </subcellularLocation>
    <subcellularLocation>
        <location evidence="1">Cell inner membrane</location>
        <topology evidence="1">Peripheral membrane protein</topology>
    </subcellularLocation>
</comment>
<comment type="similarity">
    <text evidence="1 2">Belongs to the TRAFAC class TrmE-Era-EngA-EngB-Septin-like GTPase superfamily. Era GTPase family.</text>
</comment>
<evidence type="ECO:0000255" key="1">
    <source>
        <dbReference type="HAMAP-Rule" id="MF_00367"/>
    </source>
</evidence>
<evidence type="ECO:0000255" key="2">
    <source>
        <dbReference type="PROSITE-ProRule" id="PRU01050"/>
    </source>
</evidence>
<reference key="1">
    <citation type="journal article" date="2005" name="Jpn. Agric. Res. Q.">
        <title>Genome sequence of Xanthomonas oryzae pv. oryzae suggests contribution of large numbers of effector genes and insertion sequences to its race diversity.</title>
        <authorList>
            <person name="Ochiai H."/>
            <person name="Inoue Y."/>
            <person name="Takeya M."/>
            <person name="Sasaki A."/>
            <person name="Kaku H."/>
        </authorList>
    </citation>
    <scope>NUCLEOTIDE SEQUENCE [LARGE SCALE GENOMIC DNA]</scope>
    <source>
        <strain>MAFF 311018</strain>
    </source>
</reference>
<accession>Q2P4M0</accession>
<sequence length="299" mass="32800">MSVTSSPHRSGSVAVIGRPNVGKSTLTNALVGAKVSIVSNRPQTTRHRLLGIATFPEGQLVLVDTPGLHREQKRAMNRVMNRAARGSLEGVDAAVLVIEAGRWDEEDTLAFRVLSDAEVPVVLVVNKVDRLKDKTALLPFLAQVSEGRTFAAVHPVSALKRKGLEALVGDLLKLVPEAEAMFGEDEITDRSQRFLAGELVREQLMRQLGEELPYATTVEIERFAEDGALLRIGAVIWVEREGQKAIVIGKGGTRLKEIGGKARLQMERLFGAKVFLETWVRVREGWSDDEAALKAFGYE</sequence>